<comment type="subcellular location">
    <subcellularLocation>
        <location evidence="4">Secreted</location>
    </subcellularLocation>
</comment>
<comment type="tissue specificity">
    <text evidence="2">Detected in the thoracic perisympathetic organs in larvae, and the dorsal ganglionic sheath in adults (at protein level).</text>
</comment>
<comment type="mass spectrometry" mass="1181.56" method="MALDI" evidence="2"/>
<comment type="similarity">
    <text evidence="1">Belongs to the FARP (FMRFamide related peptide) family.</text>
</comment>
<keyword id="KW-0027">Amidation</keyword>
<keyword id="KW-0903">Direct protein sequencing</keyword>
<keyword id="KW-0527">Neuropeptide</keyword>
<keyword id="KW-0964">Secreted</keyword>
<accession>P85459</accession>
<protein>
    <recommendedName>
        <fullName>FMRFamide-15</fullName>
    </recommendedName>
    <alternativeName>
        <fullName evidence="3">LucFMRFamide-15</fullName>
    </alternativeName>
</protein>
<dbReference type="GO" id="GO:0005576">
    <property type="term" value="C:extracellular region"/>
    <property type="evidence" value="ECO:0007669"/>
    <property type="project" value="UniProtKB-SubCell"/>
</dbReference>
<dbReference type="GO" id="GO:0007218">
    <property type="term" value="P:neuropeptide signaling pathway"/>
    <property type="evidence" value="ECO:0007669"/>
    <property type="project" value="UniProtKB-KW"/>
</dbReference>
<reference evidence="4" key="1">
    <citation type="journal article" date="2009" name="Gen. Comp. Endocrinol.">
        <title>Extended FMRFamides in dipteran insects: conservative expression in the neuroendocrine system is accompanied by rapid sequence evolution.</title>
        <authorList>
            <person name="Rahman M.M."/>
            <person name="Fromm B."/>
            <person name="Neupert S."/>
            <person name="Kreusch S."/>
            <person name="Predel R."/>
        </authorList>
    </citation>
    <scope>PROTEIN SEQUENCE</scope>
    <scope>TISSUE SPECIFICITY</scope>
    <scope>MASS SPECTROMETRY</scope>
    <scope>AMIDATION AT PHE-9</scope>
    <source>
        <strain evidence="2">Bangladesh</strain>
        <strain evidence="2">Goondiwindi</strain>
        <tissue evidence="2">Dorsal ganglionic sheath</tissue>
    </source>
</reference>
<sequence length="9" mass="1182">NPQQDFMRF</sequence>
<proteinExistence type="evidence at protein level"/>
<evidence type="ECO:0000255" key="1"/>
<evidence type="ECO:0000269" key="2">
    <source>
    </source>
</evidence>
<evidence type="ECO:0000303" key="3">
    <source>
    </source>
</evidence>
<evidence type="ECO:0000305" key="4"/>
<organism>
    <name type="scientific">Lucilia cuprina</name>
    <name type="common">Green bottle fly</name>
    <name type="synonym">Australian sheep blowfly</name>
    <dbReference type="NCBI Taxonomy" id="7375"/>
    <lineage>
        <taxon>Eukaryota</taxon>
        <taxon>Metazoa</taxon>
        <taxon>Ecdysozoa</taxon>
        <taxon>Arthropoda</taxon>
        <taxon>Hexapoda</taxon>
        <taxon>Insecta</taxon>
        <taxon>Pterygota</taxon>
        <taxon>Neoptera</taxon>
        <taxon>Endopterygota</taxon>
        <taxon>Diptera</taxon>
        <taxon>Brachycera</taxon>
        <taxon>Muscomorpha</taxon>
        <taxon>Oestroidea</taxon>
        <taxon>Calliphoridae</taxon>
        <taxon>Luciliinae</taxon>
        <taxon>Lucilia</taxon>
    </lineage>
</organism>
<name>FAR15_LUCCU</name>
<feature type="peptide" id="PRO_0000392475" description="FMRFamide-15">
    <location>
        <begin position="1"/>
        <end position="9"/>
    </location>
</feature>
<feature type="modified residue" description="Phenylalanine amide" evidence="2">
    <location>
        <position position="9"/>
    </location>
</feature>